<dbReference type="EC" id="2.5.1.7" evidence="1"/>
<dbReference type="EMBL" id="CP000449">
    <property type="protein sequence ID" value="ABI65419.1"/>
    <property type="molecule type" value="Genomic_DNA"/>
</dbReference>
<dbReference type="RefSeq" id="WP_011643066.1">
    <property type="nucleotide sequence ID" value="NC_008347.1"/>
</dbReference>
<dbReference type="SMR" id="Q0AQL8"/>
<dbReference type="STRING" id="394221.Mmar10_1126"/>
<dbReference type="KEGG" id="mmr:Mmar10_1126"/>
<dbReference type="eggNOG" id="COG0766">
    <property type="taxonomic scope" value="Bacteria"/>
</dbReference>
<dbReference type="HOGENOM" id="CLU_027387_0_0_5"/>
<dbReference type="OrthoDB" id="9803760at2"/>
<dbReference type="UniPathway" id="UPA00219"/>
<dbReference type="Proteomes" id="UP000001964">
    <property type="component" value="Chromosome"/>
</dbReference>
<dbReference type="GO" id="GO:0005737">
    <property type="term" value="C:cytoplasm"/>
    <property type="evidence" value="ECO:0007669"/>
    <property type="project" value="UniProtKB-SubCell"/>
</dbReference>
<dbReference type="GO" id="GO:0008760">
    <property type="term" value="F:UDP-N-acetylglucosamine 1-carboxyvinyltransferase activity"/>
    <property type="evidence" value="ECO:0007669"/>
    <property type="project" value="UniProtKB-UniRule"/>
</dbReference>
<dbReference type="GO" id="GO:0051301">
    <property type="term" value="P:cell division"/>
    <property type="evidence" value="ECO:0007669"/>
    <property type="project" value="UniProtKB-KW"/>
</dbReference>
<dbReference type="GO" id="GO:0071555">
    <property type="term" value="P:cell wall organization"/>
    <property type="evidence" value="ECO:0007669"/>
    <property type="project" value="UniProtKB-KW"/>
</dbReference>
<dbReference type="GO" id="GO:0009252">
    <property type="term" value="P:peptidoglycan biosynthetic process"/>
    <property type="evidence" value="ECO:0007669"/>
    <property type="project" value="UniProtKB-UniRule"/>
</dbReference>
<dbReference type="GO" id="GO:0008360">
    <property type="term" value="P:regulation of cell shape"/>
    <property type="evidence" value="ECO:0007669"/>
    <property type="project" value="UniProtKB-KW"/>
</dbReference>
<dbReference type="GO" id="GO:0019277">
    <property type="term" value="P:UDP-N-acetylgalactosamine biosynthetic process"/>
    <property type="evidence" value="ECO:0007669"/>
    <property type="project" value="InterPro"/>
</dbReference>
<dbReference type="CDD" id="cd01555">
    <property type="entry name" value="UdpNAET"/>
    <property type="match status" value="1"/>
</dbReference>
<dbReference type="FunFam" id="3.65.10.10:FF:000001">
    <property type="entry name" value="UDP-N-acetylglucosamine 1-carboxyvinyltransferase"/>
    <property type="match status" value="1"/>
</dbReference>
<dbReference type="Gene3D" id="3.65.10.10">
    <property type="entry name" value="Enolpyruvate transferase domain"/>
    <property type="match status" value="2"/>
</dbReference>
<dbReference type="HAMAP" id="MF_00111">
    <property type="entry name" value="MurA"/>
    <property type="match status" value="1"/>
</dbReference>
<dbReference type="InterPro" id="IPR001986">
    <property type="entry name" value="Enolpyruvate_Tfrase_dom"/>
</dbReference>
<dbReference type="InterPro" id="IPR036968">
    <property type="entry name" value="Enolpyruvate_Tfrase_sf"/>
</dbReference>
<dbReference type="InterPro" id="IPR050068">
    <property type="entry name" value="MurA_subfamily"/>
</dbReference>
<dbReference type="InterPro" id="IPR013792">
    <property type="entry name" value="RNA3'P_cycl/enolpyr_Trfase_a/b"/>
</dbReference>
<dbReference type="InterPro" id="IPR005750">
    <property type="entry name" value="UDP_GlcNAc_COvinyl_MurA"/>
</dbReference>
<dbReference type="NCBIfam" id="TIGR01072">
    <property type="entry name" value="murA"/>
    <property type="match status" value="1"/>
</dbReference>
<dbReference type="NCBIfam" id="NF006873">
    <property type="entry name" value="PRK09369.1"/>
    <property type="match status" value="1"/>
</dbReference>
<dbReference type="PANTHER" id="PTHR43783">
    <property type="entry name" value="UDP-N-ACETYLGLUCOSAMINE 1-CARBOXYVINYLTRANSFERASE"/>
    <property type="match status" value="1"/>
</dbReference>
<dbReference type="PANTHER" id="PTHR43783:SF1">
    <property type="entry name" value="UDP-N-ACETYLGLUCOSAMINE 1-CARBOXYVINYLTRANSFERASE"/>
    <property type="match status" value="1"/>
</dbReference>
<dbReference type="Pfam" id="PF00275">
    <property type="entry name" value="EPSP_synthase"/>
    <property type="match status" value="1"/>
</dbReference>
<dbReference type="SUPFAM" id="SSF55205">
    <property type="entry name" value="EPT/RTPC-like"/>
    <property type="match status" value="1"/>
</dbReference>
<evidence type="ECO:0000255" key="1">
    <source>
        <dbReference type="HAMAP-Rule" id="MF_00111"/>
    </source>
</evidence>
<protein>
    <recommendedName>
        <fullName evidence="1">UDP-N-acetylglucosamine 1-carboxyvinyltransferase</fullName>
        <ecNumber evidence="1">2.5.1.7</ecNumber>
    </recommendedName>
    <alternativeName>
        <fullName evidence="1">Enoylpyruvate transferase</fullName>
    </alternativeName>
    <alternativeName>
        <fullName evidence="1">UDP-N-acetylglucosamine enolpyruvyl transferase</fullName>
        <shortName evidence="1">EPT</shortName>
    </alternativeName>
</protein>
<reference key="1">
    <citation type="submission" date="2006-08" db="EMBL/GenBank/DDBJ databases">
        <title>Complete sequence of Maricaulis maris MCS10.</title>
        <authorList>
            <consortium name="US DOE Joint Genome Institute"/>
            <person name="Copeland A."/>
            <person name="Lucas S."/>
            <person name="Lapidus A."/>
            <person name="Barry K."/>
            <person name="Detter J.C."/>
            <person name="Glavina del Rio T."/>
            <person name="Hammon N."/>
            <person name="Israni S."/>
            <person name="Dalin E."/>
            <person name="Tice H."/>
            <person name="Pitluck S."/>
            <person name="Saunders E."/>
            <person name="Brettin T."/>
            <person name="Bruce D."/>
            <person name="Han C."/>
            <person name="Tapia R."/>
            <person name="Gilna P."/>
            <person name="Schmutz J."/>
            <person name="Larimer F."/>
            <person name="Land M."/>
            <person name="Hauser L."/>
            <person name="Kyrpides N."/>
            <person name="Mikhailova N."/>
            <person name="Viollier P."/>
            <person name="Stephens C."/>
            <person name="Richardson P."/>
        </authorList>
    </citation>
    <scope>NUCLEOTIDE SEQUENCE [LARGE SCALE GENOMIC DNA]</scope>
    <source>
        <strain>MCS10</strain>
    </source>
</reference>
<keyword id="KW-0131">Cell cycle</keyword>
<keyword id="KW-0132">Cell division</keyword>
<keyword id="KW-0133">Cell shape</keyword>
<keyword id="KW-0961">Cell wall biogenesis/degradation</keyword>
<keyword id="KW-0963">Cytoplasm</keyword>
<keyword id="KW-0573">Peptidoglycan synthesis</keyword>
<keyword id="KW-0670">Pyruvate</keyword>
<keyword id="KW-1185">Reference proteome</keyword>
<keyword id="KW-0808">Transferase</keyword>
<accession>Q0AQL8</accession>
<feature type="chain" id="PRO_1000023054" description="UDP-N-acetylglucosamine 1-carboxyvinyltransferase">
    <location>
        <begin position="1"/>
        <end position="423"/>
    </location>
</feature>
<feature type="active site" description="Proton donor" evidence="1">
    <location>
        <position position="117"/>
    </location>
</feature>
<feature type="binding site" evidence="1">
    <location>
        <begin position="22"/>
        <end position="23"/>
    </location>
    <ligand>
        <name>phosphoenolpyruvate</name>
        <dbReference type="ChEBI" id="CHEBI:58702"/>
    </ligand>
</feature>
<feature type="binding site" evidence="1">
    <location>
        <position position="93"/>
    </location>
    <ligand>
        <name>UDP-N-acetyl-alpha-D-glucosamine</name>
        <dbReference type="ChEBI" id="CHEBI:57705"/>
    </ligand>
</feature>
<feature type="binding site" evidence="1">
    <location>
        <begin position="122"/>
        <end position="126"/>
    </location>
    <ligand>
        <name>UDP-N-acetyl-alpha-D-glucosamine</name>
        <dbReference type="ChEBI" id="CHEBI:57705"/>
    </ligand>
</feature>
<feature type="binding site" evidence="1">
    <location>
        <position position="308"/>
    </location>
    <ligand>
        <name>UDP-N-acetyl-alpha-D-glucosamine</name>
        <dbReference type="ChEBI" id="CHEBI:57705"/>
    </ligand>
</feature>
<feature type="binding site" evidence="1">
    <location>
        <position position="330"/>
    </location>
    <ligand>
        <name>UDP-N-acetyl-alpha-D-glucosamine</name>
        <dbReference type="ChEBI" id="CHEBI:57705"/>
    </ligand>
</feature>
<feature type="modified residue" description="2-(S-cysteinyl)pyruvic acid O-phosphothioketal" evidence="1">
    <location>
        <position position="117"/>
    </location>
</feature>
<sequence length="423" mass="44179">MDRIVIQGGARLEGRIEISGAKNSALKLMAAALLTDEPVILTRMPRLADSRFLGHLLEKLGVEVSDGQDAQLRLHAATIADTFAPYDLVRKMRASFNVLGPLLAREGHARVSLPGGCAIGARPVDLHLKALKALGAQIEISEGYVSAKAPAGGLVGGEIDLPFASVGATEHAMLAASLARGETVIENAAREPEIGDLADCLTAMGATIEGAGSSTIRIQGQSRLSGVTHKVVADRIETATYALAVAAAGGDAVLEGAVLAHNKALWSSMGEAGVTVEAVADGVRVARNGSRLDSVDIETQPFPGFPTDAQAQFMALMSLANGSSVIRETIFENRFMHAPELARLGADITVHGNEAVVRGVERLRGAPVMATDLRASVSLVIAGLAAEGETVVNRVYHLDRGFERLEAKLTGCGARIERLPDGA</sequence>
<organism>
    <name type="scientific">Maricaulis maris (strain MCS10)</name>
    <name type="common">Caulobacter maris</name>
    <dbReference type="NCBI Taxonomy" id="394221"/>
    <lineage>
        <taxon>Bacteria</taxon>
        <taxon>Pseudomonadati</taxon>
        <taxon>Pseudomonadota</taxon>
        <taxon>Alphaproteobacteria</taxon>
        <taxon>Maricaulales</taxon>
        <taxon>Maricaulaceae</taxon>
        <taxon>Maricaulis</taxon>
    </lineage>
</organism>
<comment type="function">
    <text evidence="1">Cell wall formation. Adds enolpyruvyl to UDP-N-acetylglucosamine.</text>
</comment>
<comment type="catalytic activity">
    <reaction evidence="1">
        <text>phosphoenolpyruvate + UDP-N-acetyl-alpha-D-glucosamine = UDP-N-acetyl-3-O-(1-carboxyvinyl)-alpha-D-glucosamine + phosphate</text>
        <dbReference type="Rhea" id="RHEA:18681"/>
        <dbReference type="ChEBI" id="CHEBI:43474"/>
        <dbReference type="ChEBI" id="CHEBI:57705"/>
        <dbReference type="ChEBI" id="CHEBI:58702"/>
        <dbReference type="ChEBI" id="CHEBI:68483"/>
        <dbReference type="EC" id="2.5.1.7"/>
    </reaction>
</comment>
<comment type="pathway">
    <text evidence="1">Cell wall biogenesis; peptidoglycan biosynthesis.</text>
</comment>
<comment type="subcellular location">
    <subcellularLocation>
        <location evidence="1">Cytoplasm</location>
    </subcellularLocation>
</comment>
<comment type="similarity">
    <text evidence="1">Belongs to the EPSP synthase family. MurA subfamily.</text>
</comment>
<proteinExistence type="inferred from homology"/>
<gene>
    <name evidence="1" type="primary">murA</name>
    <name type="ordered locus">Mmar10_1126</name>
</gene>
<name>MURA_MARMM</name>